<accession>P13430</accession>
<accession>Q0TL48</accession>
<organism>
    <name type="scientific">Escherichia coli O6:K15:H31 (strain 536 / UPEC)</name>
    <dbReference type="NCBI Taxonomy" id="362663"/>
    <lineage>
        <taxon>Bacteria</taxon>
        <taxon>Pseudomonadati</taxon>
        <taxon>Pseudomonadota</taxon>
        <taxon>Gammaproteobacteria</taxon>
        <taxon>Enterobacterales</taxon>
        <taxon>Enterobacteriaceae</taxon>
        <taxon>Escherichia</taxon>
    </lineage>
</organism>
<proteinExistence type="evidence at protein level"/>
<dbReference type="EMBL" id="X16664">
    <property type="protein sequence ID" value="CAA34653.1"/>
    <property type="molecule type" value="Genomic_DNA"/>
</dbReference>
<dbReference type="EMBL" id="CP000247">
    <property type="protein sequence ID" value="ABG68333.1"/>
    <property type="molecule type" value="Genomic_DNA"/>
</dbReference>
<dbReference type="PIR" id="S15926">
    <property type="entry name" value="S15926"/>
</dbReference>
<dbReference type="RefSeq" id="WP_000767892.1">
    <property type="nucleotide sequence ID" value="NC_008253.1"/>
</dbReference>
<dbReference type="SMR" id="P13430"/>
<dbReference type="KEGG" id="ecp:ECP_0298"/>
<dbReference type="HOGENOM" id="CLU_088965_6_1_6"/>
<dbReference type="Proteomes" id="UP000009182">
    <property type="component" value="Chromosome"/>
</dbReference>
<dbReference type="GO" id="GO:0009289">
    <property type="term" value="C:pilus"/>
    <property type="evidence" value="ECO:0007669"/>
    <property type="project" value="UniProtKB-SubCell"/>
</dbReference>
<dbReference type="GO" id="GO:0043709">
    <property type="term" value="P:cell adhesion involved in single-species biofilm formation"/>
    <property type="evidence" value="ECO:0007669"/>
    <property type="project" value="TreeGrafter"/>
</dbReference>
<dbReference type="Gene3D" id="2.60.40.1090">
    <property type="entry name" value="Fimbrial-type adhesion domain"/>
    <property type="match status" value="1"/>
</dbReference>
<dbReference type="InterPro" id="IPR000259">
    <property type="entry name" value="Adhesion_dom_fimbrial"/>
</dbReference>
<dbReference type="InterPro" id="IPR036937">
    <property type="entry name" value="Adhesion_dom_fimbrial_sf"/>
</dbReference>
<dbReference type="InterPro" id="IPR008966">
    <property type="entry name" value="Adhesion_dom_sf"/>
</dbReference>
<dbReference type="InterPro" id="IPR050263">
    <property type="entry name" value="Bact_Fimbrial_Adh_Pro"/>
</dbReference>
<dbReference type="PANTHER" id="PTHR33420">
    <property type="entry name" value="FIMBRIAL SUBUNIT ELFA-RELATED"/>
    <property type="match status" value="1"/>
</dbReference>
<dbReference type="PANTHER" id="PTHR33420:SF27">
    <property type="entry name" value="PROTEIN FIMG"/>
    <property type="match status" value="1"/>
</dbReference>
<dbReference type="Pfam" id="PF00419">
    <property type="entry name" value="Fimbrial"/>
    <property type="match status" value="1"/>
</dbReference>
<dbReference type="SUPFAM" id="SSF49401">
    <property type="entry name" value="Bacterial adhesins"/>
    <property type="match status" value="1"/>
</dbReference>
<protein>
    <recommendedName>
        <fullName>S-fimbrial adhesin protein SfaS</fullName>
    </recommendedName>
</protein>
<reference key="1">
    <citation type="journal article" date="1989" name="Mol. Microbiol.">
        <title>Analysis of genes coding for the sialic acid-binding adhesin and two other minor fimbrial subunits of the S-fimbrial adhesin determinant of Escherichia coli.</title>
        <authorList>
            <person name="Schmoll T."/>
            <person name="Hoschuetzky H."/>
            <person name="Morschhaeuser J."/>
            <person name="Lottspeich F."/>
            <person name="Jann K."/>
            <person name="Hacker J."/>
        </authorList>
    </citation>
    <scope>NUCLEOTIDE SEQUENCE [GENOMIC DNA]</scope>
    <scope>PROTEIN SEQUENCE OF 23-63</scope>
    <scope>SUBCELLULAR LOCATION</scope>
    <scope>IDENTIFICATION IN FIMBRIAE COMPLEX</scope>
    <scope>DISRUPTION PHENOTYPE</scope>
</reference>
<reference key="2">
    <citation type="journal article" date="2006" name="Mol. Microbiol.">
        <title>Role of pathogenicity island-associated integrases in the genome plasticity of uropathogenic Escherichia coli strain 536.</title>
        <authorList>
            <person name="Hochhut B."/>
            <person name="Wilde C."/>
            <person name="Balling G."/>
            <person name="Middendorf B."/>
            <person name="Dobrindt U."/>
            <person name="Brzuszkiewicz E."/>
            <person name="Gottschalk G."/>
            <person name="Carniel E."/>
            <person name="Hacker J."/>
        </authorList>
    </citation>
    <scope>NUCLEOTIDE SEQUENCE [LARGE SCALE GENOMIC DNA]</scope>
    <source>
        <strain>536 / UPEC</strain>
    </source>
</reference>
<reference key="3">
    <citation type="journal article" date="1990" name="Infect. Immun.">
        <title>Functional analysis of the sialic acid-binding adhesin SfaS of pathogenic Escherichia coli by site-specific mutagenesis.</title>
        <authorList>
            <person name="Morschhaeuser J."/>
            <person name="Hoschuetzky H."/>
            <person name="Jann K."/>
            <person name="Hacker J."/>
        </authorList>
    </citation>
    <scope>MUTAGENESIS OF LYS-138; ARG-140 AND LYS-144</scope>
</reference>
<name>SFAS_ECOL5</name>
<gene>
    <name type="primary">sfaS</name>
    <name type="ordered locus">ECP_0298</name>
</gene>
<sequence length="163" mass="17183">MKLKAIILATGLINCIAFSAQAVDTTITVTGNVLQRTCNVPGNVDVSLGNLYVSDFPNAGSGSPWVNFDLSLTGCQNMNTVRATFSGTADGQTYYANTGNAGGIKIEIQDRDGSNASYHNGMFKTLNVQNNNATFNLKARAVSKGQVTPGNISSVITVTYTYA</sequence>
<keyword id="KW-0903">Direct protein sequencing</keyword>
<keyword id="KW-1015">Disulfide bond</keyword>
<keyword id="KW-0281">Fimbrium</keyword>
<keyword id="KW-0732">Signal</keyword>
<comment type="function">
    <text>Fimbriae (also called pili), polar filaments radiating from the surface of the bacterium to a length of 0.5-1.5 micrometers and numbering 100-300 per cell, enable bacteria to colonize the epithelium of specific host organs.</text>
</comment>
<comment type="function">
    <text>A minor fimbrial subunit, this protein is necessary for full expression of S-specific binding. S-fimbrial adhesins enable pathogenic E.coli causing urinary-tract infections or newborn meningitis to attach to glycoproteins terminating with alpha-sialic acid-(2-3)-beta-Gal. This protein binds to the alpha-sialic acid-(2-3)-beta-Gal and is thus responsible for erythrocyte recognition and hemagglutination.</text>
</comment>
<comment type="subcellular location">
    <subcellularLocation>
        <location evidence="2">Fimbrium</location>
    </subcellularLocation>
</comment>
<comment type="disruption phenotype">
    <text evidence="2">Deletion prevents hemagglutination (erythrocyte recognition), although cells are still poorly fimbriated.</text>
</comment>
<comment type="similarity">
    <text evidence="3">Belongs to the fimbrial protein family.</text>
</comment>
<feature type="signal peptide" evidence="2">
    <location>
        <begin position="1"/>
        <end position="22"/>
    </location>
</feature>
<feature type="chain" id="PRO_0000009202" description="S-fimbrial adhesin protein SfaS">
    <location>
        <begin position="23"/>
        <end position="163"/>
    </location>
</feature>
<feature type="region of interest" description="Involved in sialic acid binding">
    <location>
        <begin position="138"/>
        <end position="144"/>
    </location>
</feature>
<feature type="disulfide bond" evidence="3">
    <location>
        <begin position="38"/>
        <end position="75"/>
    </location>
</feature>
<feature type="mutagenesis site" description="No change in S-binding." evidence="1">
    <original>K</original>
    <variation>T</variation>
    <location>
        <position position="138"/>
    </location>
</feature>
<feature type="mutagenesis site" description="No hemagglutination, weak reaction with antiadhesin-specific antibody A1." evidence="1">
    <original>R</original>
    <variation>S</variation>
    <location>
        <position position="140"/>
    </location>
</feature>
<feature type="mutagenesis site" description="No hemagglutination, no reaction with antiadhesin-specific antibody A1." evidence="1">
    <original>K</original>
    <variation>T</variation>
    <location>
        <position position="144"/>
    </location>
</feature>
<evidence type="ECO:0000269" key="1">
    <source>
    </source>
</evidence>
<evidence type="ECO:0000269" key="2">
    <source>
    </source>
</evidence>
<evidence type="ECO:0000305" key="3"/>